<evidence type="ECO:0000255" key="1">
    <source>
        <dbReference type="HAMAP-Rule" id="MF_00580"/>
    </source>
</evidence>
<feature type="chain" id="PRO_1000025227" description="Co-chaperonin GroES">
    <location>
        <begin position="1"/>
        <end position="86"/>
    </location>
</feature>
<dbReference type="EMBL" id="CP000767">
    <property type="protein sequence ID" value="EAU00069.1"/>
    <property type="molecule type" value="Genomic_DNA"/>
</dbReference>
<dbReference type="RefSeq" id="WP_009651340.1">
    <property type="nucleotide sequence ID" value="NC_009715.2"/>
</dbReference>
<dbReference type="SMR" id="A7GZ44"/>
<dbReference type="STRING" id="360105.CCV52592_0309"/>
<dbReference type="GeneID" id="61002483"/>
<dbReference type="KEGG" id="ccv:CCV52592_0309"/>
<dbReference type="HOGENOM" id="CLU_132825_2_0_7"/>
<dbReference type="OrthoDB" id="9806791at2"/>
<dbReference type="Proteomes" id="UP000006380">
    <property type="component" value="Chromosome"/>
</dbReference>
<dbReference type="GO" id="GO:0005737">
    <property type="term" value="C:cytoplasm"/>
    <property type="evidence" value="ECO:0007669"/>
    <property type="project" value="UniProtKB-SubCell"/>
</dbReference>
<dbReference type="GO" id="GO:0005524">
    <property type="term" value="F:ATP binding"/>
    <property type="evidence" value="ECO:0007669"/>
    <property type="project" value="InterPro"/>
</dbReference>
<dbReference type="GO" id="GO:0046872">
    <property type="term" value="F:metal ion binding"/>
    <property type="evidence" value="ECO:0007669"/>
    <property type="project" value="TreeGrafter"/>
</dbReference>
<dbReference type="GO" id="GO:0044183">
    <property type="term" value="F:protein folding chaperone"/>
    <property type="evidence" value="ECO:0007669"/>
    <property type="project" value="InterPro"/>
</dbReference>
<dbReference type="GO" id="GO:0051087">
    <property type="term" value="F:protein-folding chaperone binding"/>
    <property type="evidence" value="ECO:0007669"/>
    <property type="project" value="TreeGrafter"/>
</dbReference>
<dbReference type="GO" id="GO:0051082">
    <property type="term" value="F:unfolded protein binding"/>
    <property type="evidence" value="ECO:0007669"/>
    <property type="project" value="TreeGrafter"/>
</dbReference>
<dbReference type="GO" id="GO:0051085">
    <property type="term" value="P:chaperone cofactor-dependent protein refolding"/>
    <property type="evidence" value="ECO:0007669"/>
    <property type="project" value="TreeGrafter"/>
</dbReference>
<dbReference type="CDD" id="cd00320">
    <property type="entry name" value="cpn10"/>
    <property type="match status" value="1"/>
</dbReference>
<dbReference type="FunFam" id="2.30.33.40:FF:000001">
    <property type="entry name" value="10 kDa chaperonin"/>
    <property type="match status" value="1"/>
</dbReference>
<dbReference type="Gene3D" id="2.30.33.40">
    <property type="entry name" value="GroES chaperonin"/>
    <property type="match status" value="1"/>
</dbReference>
<dbReference type="HAMAP" id="MF_00580">
    <property type="entry name" value="CH10"/>
    <property type="match status" value="1"/>
</dbReference>
<dbReference type="InterPro" id="IPR020818">
    <property type="entry name" value="Chaperonin_GroES"/>
</dbReference>
<dbReference type="InterPro" id="IPR037124">
    <property type="entry name" value="Chaperonin_GroES_sf"/>
</dbReference>
<dbReference type="InterPro" id="IPR011032">
    <property type="entry name" value="GroES-like_sf"/>
</dbReference>
<dbReference type="NCBIfam" id="NF001537">
    <property type="entry name" value="PRK00364.3-3"/>
    <property type="match status" value="1"/>
</dbReference>
<dbReference type="PANTHER" id="PTHR10772">
    <property type="entry name" value="10 KDA HEAT SHOCK PROTEIN"/>
    <property type="match status" value="1"/>
</dbReference>
<dbReference type="PANTHER" id="PTHR10772:SF58">
    <property type="entry name" value="CO-CHAPERONIN GROES"/>
    <property type="match status" value="1"/>
</dbReference>
<dbReference type="Pfam" id="PF00166">
    <property type="entry name" value="Cpn10"/>
    <property type="match status" value="1"/>
</dbReference>
<dbReference type="PRINTS" id="PR00297">
    <property type="entry name" value="CHAPERONIN10"/>
</dbReference>
<dbReference type="SMART" id="SM00883">
    <property type="entry name" value="Cpn10"/>
    <property type="match status" value="1"/>
</dbReference>
<dbReference type="SUPFAM" id="SSF50129">
    <property type="entry name" value="GroES-like"/>
    <property type="match status" value="1"/>
</dbReference>
<name>CH10_CAMC5</name>
<reference key="1">
    <citation type="submission" date="2007-07" db="EMBL/GenBank/DDBJ databases">
        <title>Genome sequence of Campylobacter curvus 525.92 isolated from human feces.</title>
        <authorList>
            <person name="Fouts D.E."/>
            <person name="Mongodin E.F."/>
            <person name="Puiu D."/>
            <person name="Sebastian Y."/>
            <person name="Miller W.G."/>
            <person name="Mandrell R.E."/>
            <person name="Lastovica A.J."/>
            <person name="Nelson K.E."/>
        </authorList>
    </citation>
    <scope>NUCLEOTIDE SEQUENCE [LARGE SCALE GENOMIC DNA]</scope>
    <source>
        <strain>525.92</strain>
    </source>
</reference>
<protein>
    <recommendedName>
        <fullName evidence="1">Co-chaperonin GroES</fullName>
    </recommendedName>
    <alternativeName>
        <fullName evidence="1">10 kDa chaperonin</fullName>
    </alternativeName>
    <alternativeName>
        <fullName evidence="1">Chaperonin-10</fullName>
        <shortName evidence="1">Cpn10</shortName>
    </alternativeName>
</protein>
<keyword id="KW-0143">Chaperone</keyword>
<keyword id="KW-0963">Cytoplasm</keyword>
<keyword id="KW-1185">Reference proteome</keyword>
<gene>
    <name evidence="1" type="primary">groES</name>
    <name evidence="1" type="synonym">groS</name>
    <name type="ordered locus">Ccur92_11820</name>
    <name type="ORF">CCV52592_0309</name>
</gene>
<proteinExistence type="inferred from homology"/>
<sequence length="86" mass="9300">MNFQPLGKRVLVERVEETKTTASGIIIPDNAKEKPLSGEVKAVGPEVEGVKTGDKVVFAKYGGTEINLDDKTYLVLNIDDVLGVIK</sequence>
<comment type="function">
    <text evidence="1">Together with the chaperonin GroEL, plays an essential role in assisting protein folding. The GroEL-GroES system forms a nano-cage that allows encapsulation of the non-native substrate proteins and provides a physical environment optimized to promote and accelerate protein folding. GroES binds to the apical surface of the GroEL ring, thereby capping the opening of the GroEL channel.</text>
</comment>
<comment type="subunit">
    <text evidence="1">Heptamer of 7 subunits arranged in a ring. Interacts with the chaperonin GroEL.</text>
</comment>
<comment type="subcellular location">
    <subcellularLocation>
        <location evidence="1">Cytoplasm</location>
    </subcellularLocation>
</comment>
<comment type="similarity">
    <text evidence="1">Belongs to the GroES chaperonin family.</text>
</comment>
<accession>A7GZ44</accession>
<organism>
    <name type="scientific">Campylobacter curvus (strain 525.92)</name>
    <dbReference type="NCBI Taxonomy" id="360105"/>
    <lineage>
        <taxon>Bacteria</taxon>
        <taxon>Pseudomonadati</taxon>
        <taxon>Campylobacterota</taxon>
        <taxon>Epsilonproteobacteria</taxon>
        <taxon>Campylobacterales</taxon>
        <taxon>Campylobacteraceae</taxon>
        <taxon>Campylobacter</taxon>
    </lineage>
</organism>